<dbReference type="EC" id="3.1.2.-" evidence="3"/>
<dbReference type="EMBL" id="BK008910">
    <property type="protein sequence ID" value="DAA64707.1"/>
    <property type="molecule type" value="Genomic_DNA"/>
</dbReference>
<dbReference type="EMBL" id="EQ962655">
    <property type="protein sequence ID" value="EED18005.1"/>
    <property type="molecule type" value="Genomic_DNA"/>
</dbReference>
<dbReference type="RefSeq" id="XP_002481997.1">
    <property type="nucleotide sequence ID" value="XM_002481952.1"/>
</dbReference>
<dbReference type="SMR" id="B8M9K3"/>
<dbReference type="ESTHER" id="talsn-tropf">
    <property type="family name" value="FSH1"/>
</dbReference>
<dbReference type="GeneID" id="8105836"/>
<dbReference type="VEuPathDB" id="FungiDB:TSTA_117780"/>
<dbReference type="eggNOG" id="KOG2551">
    <property type="taxonomic scope" value="Eukaryota"/>
</dbReference>
<dbReference type="HOGENOM" id="CLU_051938_0_0_1"/>
<dbReference type="InParanoid" id="B8M9K3"/>
<dbReference type="OMA" id="TEWGPFR"/>
<dbReference type="OrthoDB" id="4212945at2759"/>
<dbReference type="PhylomeDB" id="B8M9K3"/>
<dbReference type="Proteomes" id="UP000001745">
    <property type="component" value="Unassembled WGS sequence"/>
</dbReference>
<dbReference type="GO" id="GO:0005737">
    <property type="term" value="C:cytoplasm"/>
    <property type="evidence" value="ECO:0007669"/>
    <property type="project" value="TreeGrafter"/>
</dbReference>
<dbReference type="GO" id="GO:0005634">
    <property type="term" value="C:nucleus"/>
    <property type="evidence" value="ECO:0007669"/>
    <property type="project" value="TreeGrafter"/>
</dbReference>
<dbReference type="GO" id="GO:0016787">
    <property type="term" value="F:hydrolase activity"/>
    <property type="evidence" value="ECO:0007669"/>
    <property type="project" value="UniProtKB-KW"/>
</dbReference>
<dbReference type="GO" id="GO:0044550">
    <property type="term" value="P:secondary metabolite biosynthetic process"/>
    <property type="evidence" value="ECO:0007669"/>
    <property type="project" value="TreeGrafter"/>
</dbReference>
<dbReference type="Gene3D" id="3.40.50.1820">
    <property type="entry name" value="alpha/beta hydrolase"/>
    <property type="match status" value="1"/>
</dbReference>
<dbReference type="InterPro" id="IPR029058">
    <property type="entry name" value="AB_hydrolase_fold"/>
</dbReference>
<dbReference type="InterPro" id="IPR005645">
    <property type="entry name" value="FSH-like_dom"/>
</dbReference>
<dbReference type="InterPro" id="IPR050593">
    <property type="entry name" value="LovG"/>
</dbReference>
<dbReference type="PANTHER" id="PTHR48070:SF3">
    <property type="entry name" value="ESTERASE DBAE-RELATED"/>
    <property type="match status" value="1"/>
</dbReference>
<dbReference type="PANTHER" id="PTHR48070">
    <property type="entry name" value="ESTERASE OVCA2"/>
    <property type="match status" value="1"/>
</dbReference>
<dbReference type="Pfam" id="PF03959">
    <property type="entry name" value="FSH1"/>
    <property type="match status" value="1"/>
</dbReference>
<dbReference type="SUPFAM" id="SSF53474">
    <property type="entry name" value="alpha/beta-Hydrolases"/>
    <property type="match status" value="1"/>
</dbReference>
<reference key="1">
    <citation type="journal article" date="2012" name="Proc. Natl. Acad. Sci. U.S.A.">
        <title>Genetic, molecular, and biochemical basis of fungal tropolone biosynthesis.</title>
        <authorList>
            <person name="Davison J."/>
            <person name="al Fahad A."/>
            <person name="Cai M."/>
            <person name="Song Z."/>
            <person name="Yehia S.Y."/>
            <person name="Lazarus C.M."/>
            <person name="Bailey A.M."/>
            <person name="Simpson T.J."/>
            <person name="Cox R.J."/>
        </authorList>
    </citation>
    <scope>NUCLEOTIDE SEQUENCE [GENOMIC DNA]</scope>
    <scope>FUNCTION</scope>
    <source>
        <strain>ATCC 10500 / CBS 375.48 / QM 6759 / NRRL 1006</strain>
    </source>
</reference>
<reference key="2">
    <citation type="journal article" date="2014" name="Angew. Chem. Int. Ed.">
        <title>The biosynthesis and catabolism of the maleic anhydride moiety of stipitatonic acid.</title>
        <authorList>
            <person name="al Fahad A."/>
            <person name="Abood A."/>
            <person name="Simpson T.J."/>
            <person name="Cox R.J."/>
        </authorList>
    </citation>
    <scope>NUCLEOTIDE SEQUENCE [GENOMIC DNA]</scope>
    <scope>FUNCTION</scope>
    <source>
        <strain>ATCC 10500 / CBS 375.48 / QM 6759 / NRRL 1006</strain>
    </source>
</reference>
<reference key="3">
    <citation type="journal article" date="2015" name="Genome Announc.">
        <title>Genome sequence of the AIDS-associated pathogen Penicillium marneffei (ATCC18224) and its near taxonomic relative Talaromyces stipitatus (ATCC10500).</title>
        <authorList>
            <person name="Nierman W.C."/>
            <person name="Fedorova-Abrams N.D."/>
            <person name="Andrianopoulos A."/>
        </authorList>
    </citation>
    <scope>NUCLEOTIDE SEQUENCE [LARGE SCALE GENOMIC DNA]</scope>
    <source>
        <strain>ATCC 10500 / CBS 375.48 / QM 6759 / NRRL 1006</strain>
    </source>
</reference>
<sequence length="306" mass="34110">MLHGMSPECALSKLLSSLEFHTLYRYTMTQKHNFPSNNKDTLHLPRILCLHGGGTNARIFRAQCRALEKALRTSFRLCYAEALFPSQPGPDVTAVYRDFGPFRAWIDSPDANPVTMTEALQISICKAIMEDDQRGATGPVVGLLGFSQGAKVCASLILEQQLLGRTFGDHSHLPFRLPQWRFAVLLAGRGPLVTLSHLSVGADIMQKMAHLCENDDSSGLDSQENLGNVILTRELIQVPTIHVHGRKDPALDLHRKLYYDDFDPRYSKVMEWDGAHRVPLKSKDVATLVKEINVLWASVSHSNVQG</sequence>
<keyword id="KW-0378">Hydrolase</keyword>
<keyword id="KW-1185">Reference proteome</keyword>
<name>TROPF_TALSN</name>
<organism>
    <name type="scientific">Talaromyces stipitatus (strain ATCC 10500 / CBS 375.48 / QM 6759 / NRRL 1006)</name>
    <name type="common">Penicillium stipitatum</name>
    <dbReference type="NCBI Taxonomy" id="441959"/>
    <lineage>
        <taxon>Eukaryota</taxon>
        <taxon>Fungi</taxon>
        <taxon>Dikarya</taxon>
        <taxon>Ascomycota</taxon>
        <taxon>Pezizomycotina</taxon>
        <taxon>Eurotiomycetes</taxon>
        <taxon>Eurotiomycetidae</taxon>
        <taxon>Eurotiales</taxon>
        <taxon>Trichocomaceae</taxon>
        <taxon>Talaromyces</taxon>
        <taxon>Talaromyces sect. Talaromyces</taxon>
    </lineage>
</organism>
<feature type="chain" id="PRO_0000437133" description="Esterase tropF">
    <location>
        <begin position="1"/>
        <end position="306"/>
    </location>
</feature>
<feature type="active site" description="Charge relay system" evidence="1">
    <location>
        <position position="147"/>
    </location>
</feature>
<feature type="active site" description="Charge relay system" evidence="1">
    <location>
        <position position="248"/>
    </location>
</feature>
<feature type="active site" description="Charge relay system" evidence="1">
    <location>
        <position position="276"/>
    </location>
</feature>
<comment type="function">
    <text evidence="2 3">Esterase; part of the gene cluster that mediates the biosynthesis of the tropolone class of fungal maleic anhydrides (PubMed:22508998, PubMed:24863423). The pathway begins with the synthesis of 3-methylorcinaldehyde by the non-reducing polyketide synthase (PKS) tropA (PubMed:22508998). 3-methylorcinaldehyde is the substrate for the FAD-dependent monooxygenase tropB to yield a dearomatized hydroxycyclohexadione (PubMed:22508998, PubMed:24863423). The 2-oxoglutarate-dependent dioxygenase tropC then performs the oxidative ring expansion to provide the first tropolone metabolite stipitaldehyde (PubMed:22508998, PubMed:24863423). Trop D converts stipitaldehyde into stipitacetal which is in turn converted to stipitalide by the short-chain dehydrogenase/reductase tropE (PubMed:24863423). The next steps involve tropF, tropG, tropH, tropI and tropJ to form successive tropolone maleic anhydrides including stipitaldehydic, stipitatonic and stipitatic acids (PubMed:24863423).</text>
</comment>
<comment type="pathway">
    <text evidence="3">Secondary metabolite biosynthesis.</text>
</comment>
<comment type="similarity">
    <text evidence="6">Belongs to the LovG family.</text>
</comment>
<proteinExistence type="inferred from homology"/>
<gene>
    <name evidence="5" type="primary">tropF</name>
    <name evidence="4" type="synonym">tsR3</name>
    <name type="ORF">TSTA_117780</name>
</gene>
<evidence type="ECO:0000250" key="1">
    <source>
        <dbReference type="UniProtKB" id="P38777"/>
    </source>
</evidence>
<evidence type="ECO:0000269" key="2">
    <source>
    </source>
</evidence>
<evidence type="ECO:0000269" key="3">
    <source>
    </source>
</evidence>
<evidence type="ECO:0000303" key="4">
    <source>
    </source>
</evidence>
<evidence type="ECO:0000303" key="5">
    <source>
    </source>
</evidence>
<evidence type="ECO:0000305" key="6"/>
<protein>
    <recommendedName>
        <fullName evidence="4">Esterase tropF</fullName>
        <ecNumber evidence="3">3.1.2.-</ecNumber>
    </recommendedName>
    <alternativeName>
        <fullName evidence="5">Tropolone synthesis protein F</fullName>
    </alternativeName>
</protein>
<accession>B8M9K3</accession>